<feature type="chain" id="PRO_0000135989" description="Shikimate dehydrogenase (NADP(+))">
    <location>
        <begin position="1"/>
        <end position="289"/>
    </location>
</feature>
<feature type="active site" description="Proton acceptor" evidence="1">
    <location>
        <position position="70"/>
    </location>
</feature>
<feature type="binding site" evidence="1">
    <location>
        <begin position="19"/>
        <end position="21"/>
    </location>
    <ligand>
        <name>shikimate</name>
        <dbReference type="ChEBI" id="CHEBI:36208"/>
    </ligand>
</feature>
<feature type="binding site" evidence="1">
    <location>
        <position position="66"/>
    </location>
    <ligand>
        <name>shikimate</name>
        <dbReference type="ChEBI" id="CHEBI:36208"/>
    </ligand>
</feature>
<feature type="binding site" evidence="1">
    <location>
        <position position="91"/>
    </location>
    <ligand>
        <name>shikimate</name>
        <dbReference type="ChEBI" id="CHEBI:36208"/>
    </ligand>
</feature>
<feature type="binding site" evidence="1">
    <location>
        <position position="106"/>
    </location>
    <ligand>
        <name>shikimate</name>
        <dbReference type="ChEBI" id="CHEBI:36208"/>
    </ligand>
</feature>
<feature type="binding site" evidence="1">
    <location>
        <begin position="131"/>
        <end position="135"/>
    </location>
    <ligand>
        <name>NADP(+)</name>
        <dbReference type="ChEBI" id="CHEBI:58349"/>
    </ligand>
</feature>
<feature type="binding site" evidence="1">
    <location>
        <position position="229"/>
    </location>
    <ligand>
        <name>NADP(+)</name>
        <dbReference type="ChEBI" id="CHEBI:58349"/>
    </ligand>
</feature>
<feature type="binding site" evidence="1">
    <location>
        <position position="231"/>
    </location>
    <ligand>
        <name>shikimate</name>
        <dbReference type="ChEBI" id="CHEBI:36208"/>
    </ligand>
</feature>
<feature type="binding site" evidence="1">
    <location>
        <position position="252"/>
    </location>
    <ligand>
        <name>NADP(+)</name>
        <dbReference type="ChEBI" id="CHEBI:58349"/>
    </ligand>
</feature>
<organism>
    <name type="scientific">Nostoc sp. (strain PCC 7120 / SAG 25.82 / UTEX 2576)</name>
    <dbReference type="NCBI Taxonomy" id="103690"/>
    <lineage>
        <taxon>Bacteria</taxon>
        <taxon>Bacillati</taxon>
        <taxon>Cyanobacteriota</taxon>
        <taxon>Cyanophyceae</taxon>
        <taxon>Nostocales</taxon>
        <taxon>Nostocaceae</taxon>
        <taxon>Nostoc</taxon>
    </lineage>
</organism>
<gene>
    <name evidence="1" type="primary">aroE</name>
    <name type="ordered locus">alr2057</name>
</gene>
<evidence type="ECO:0000255" key="1">
    <source>
        <dbReference type="HAMAP-Rule" id="MF_00222"/>
    </source>
</evidence>
<dbReference type="EC" id="1.1.1.25" evidence="1"/>
<dbReference type="EMBL" id="BA000019">
    <property type="protein sequence ID" value="BAB73756.1"/>
    <property type="molecule type" value="Genomic_DNA"/>
</dbReference>
<dbReference type="PIR" id="AC2063">
    <property type="entry name" value="AC2063"/>
</dbReference>
<dbReference type="RefSeq" id="WP_010996218.1">
    <property type="nucleotide sequence ID" value="NZ_RSCN01000001.1"/>
</dbReference>
<dbReference type="SMR" id="Q8YVC1"/>
<dbReference type="STRING" id="103690.gene:10494081"/>
<dbReference type="KEGG" id="ana:alr2057"/>
<dbReference type="eggNOG" id="COG0169">
    <property type="taxonomic scope" value="Bacteria"/>
</dbReference>
<dbReference type="OrthoDB" id="9792692at2"/>
<dbReference type="UniPathway" id="UPA00053">
    <property type="reaction ID" value="UER00087"/>
</dbReference>
<dbReference type="Proteomes" id="UP000002483">
    <property type="component" value="Chromosome"/>
</dbReference>
<dbReference type="GO" id="GO:0005829">
    <property type="term" value="C:cytosol"/>
    <property type="evidence" value="ECO:0007669"/>
    <property type="project" value="TreeGrafter"/>
</dbReference>
<dbReference type="GO" id="GO:0050661">
    <property type="term" value="F:NADP binding"/>
    <property type="evidence" value="ECO:0007669"/>
    <property type="project" value="InterPro"/>
</dbReference>
<dbReference type="GO" id="GO:0004764">
    <property type="term" value="F:shikimate 3-dehydrogenase (NADP+) activity"/>
    <property type="evidence" value="ECO:0007669"/>
    <property type="project" value="UniProtKB-UniRule"/>
</dbReference>
<dbReference type="GO" id="GO:0008652">
    <property type="term" value="P:amino acid biosynthetic process"/>
    <property type="evidence" value="ECO:0007669"/>
    <property type="project" value="UniProtKB-KW"/>
</dbReference>
<dbReference type="GO" id="GO:0009073">
    <property type="term" value="P:aromatic amino acid family biosynthetic process"/>
    <property type="evidence" value="ECO:0007669"/>
    <property type="project" value="UniProtKB-KW"/>
</dbReference>
<dbReference type="GO" id="GO:0009423">
    <property type="term" value="P:chorismate biosynthetic process"/>
    <property type="evidence" value="ECO:0007669"/>
    <property type="project" value="UniProtKB-UniRule"/>
</dbReference>
<dbReference type="GO" id="GO:0019632">
    <property type="term" value="P:shikimate metabolic process"/>
    <property type="evidence" value="ECO:0007669"/>
    <property type="project" value="InterPro"/>
</dbReference>
<dbReference type="CDD" id="cd01065">
    <property type="entry name" value="NAD_bind_Shikimate_DH"/>
    <property type="match status" value="1"/>
</dbReference>
<dbReference type="Gene3D" id="3.40.50.10860">
    <property type="entry name" value="Leucine Dehydrogenase, chain A, domain 1"/>
    <property type="match status" value="1"/>
</dbReference>
<dbReference type="Gene3D" id="3.40.50.720">
    <property type="entry name" value="NAD(P)-binding Rossmann-like Domain"/>
    <property type="match status" value="1"/>
</dbReference>
<dbReference type="HAMAP" id="MF_00222">
    <property type="entry name" value="Shikimate_DH_AroE"/>
    <property type="match status" value="1"/>
</dbReference>
<dbReference type="InterPro" id="IPR046346">
    <property type="entry name" value="Aminoacid_DH-like_N_sf"/>
</dbReference>
<dbReference type="InterPro" id="IPR036291">
    <property type="entry name" value="NAD(P)-bd_dom_sf"/>
</dbReference>
<dbReference type="InterPro" id="IPR041121">
    <property type="entry name" value="SDH_C"/>
</dbReference>
<dbReference type="InterPro" id="IPR011342">
    <property type="entry name" value="Shikimate_DH"/>
</dbReference>
<dbReference type="InterPro" id="IPR013708">
    <property type="entry name" value="Shikimate_DH-bd_N"/>
</dbReference>
<dbReference type="InterPro" id="IPR022893">
    <property type="entry name" value="Shikimate_DH_fam"/>
</dbReference>
<dbReference type="NCBIfam" id="TIGR00507">
    <property type="entry name" value="aroE"/>
    <property type="match status" value="1"/>
</dbReference>
<dbReference type="NCBIfam" id="NF001314">
    <property type="entry name" value="PRK00258.2-2"/>
    <property type="match status" value="1"/>
</dbReference>
<dbReference type="PANTHER" id="PTHR21089:SF1">
    <property type="entry name" value="BIFUNCTIONAL 3-DEHYDROQUINATE DEHYDRATASE_SHIKIMATE DEHYDROGENASE, CHLOROPLASTIC"/>
    <property type="match status" value="1"/>
</dbReference>
<dbReference type="PANTHER" id="PTHR21089">
    <property type="entry name" value="SHIKIMATE DEHYDROGENASE"/>
    <property type="match status" value="1"/>
</dbReference>
<dbReference type="Pfam" id="PF18317">
    <property type="entry name" value="SDH_C"/>
    <property type="match status" value="1"/>
</dbReference>
<dbReference type="Pfam" id="PF08501">
    <property type="entry name" value="Shikimate_dh_N"/>
    <property type="match status" value="1"/>
</dbReference>
<dbReference type="SUPFAM" id="SSF53223">
    <property type="entry name" value="Aminoacid dehydrogenase-like, N-terminal domain"/>
    <property type="match status" value="1"/>
</dbReference>
<dbReference type="SUPFAM" id="SSF51735">
    <property type="entry name" value="NAD(P)-binding Rossmann-fold domains"/>
    <property type="match status" value="1"/>
</dbReference>
<accession>Q8YVC1</accession>
<name>AROE_NOSS1</name>
<reference key="1">
    <citation type="journal article" date="2001" name="DNA Res.">
        <title>Complete genomic sequence of the filamentous nitrogen-fixing cyanobacterium Anabaena sp. strain PCC 7120.</title>
        <authorList>
            <person name="Kaneko T."/>
            <person name="Nakamura Y."/>
            <person name="Wolk C.P."/>
            <person name="Kuritz T."/>
            <person name="Sasamoto S."/>
            <person name="Watanabe A."/>
            <person name="Iriguchi M."/>
            <person name="Ishikawa A."/>
            <person name="Kawashima K."/>
            <person name="Kimura T."/>
            <person name="Kishida Y."/>
            <person name="Kohara M."/>
            <person name="Matsumoto M."/>
            <person name="Matsuno A."/>
            <person name="Muraki A."/>
            <person name="Nakazaki N."/>
            <person name="Shimpo S."/>
            <person name="Sugimoto M."/>
            <person name="Takazawa M."/>
            <person name="Yamada M."/>
            <person name="Yasuda M."/>
            <person name="Tabata S."/>
        </authorList>
    </citation>
    <scope>NUCLEOTIDE SEQUENCE [LARGE SCALE GENOMIC DNA]</scope>
    <source>
        <strain>PCC 7120 / SAG 25.82 / UTEX 2576</strain>
    </source>
</reference>
<proteinExistence type="inferred from homology"/>
<sequence length="289" mass="31538">MITGKTKLLGVIGHPVEHSLSPVMHNAAIAQLGLDYVYLPFPIAPDNLEAAIALLATIGVVGFSVTIPHKQAIIPLLSEISPVAQAIGAVNTVTRQNNQWVGTNTDIEGFIAPLQTTYKRDWSQQIAVILGNGGAARAVVAGCYQLGFAEIHVVGRNVQRLEEFRHSWENSPIAENLQVHTWDYLAKLIPQANLLVNTTPIGMYPQVDESPLSAEELVNLQTGTIAYDLIYIPKPTQFLQKAQQQGAIIIDGLEMLVQQGVAALKIWLQQDDIPVDVMRQALIKHLGLK</sequence>
<comment type="function">
    <text evidence="1">Involved in the biosynthesis of the chorismate, which leads to the biosynthesis of aromatic amino acids. Catalyzes the reversible NADPH linked reduction of 3-dehydroshikimate (DHSA) to yield shikimate (SA).</text>
</comment>
<comment type="catalytic activity">
    <reaction evidence="1">
        <text>shikimate + NADP(+) = 3-dehydroshikimate + NADPH + H(+)</text>
        <dbReference type="Rhea" id="RHEA:17737"/>
        <dbReference type="ChEBI" id="CHEBI:15378"/>
        <dbReference type="ChEBI" id="CHEBI:16630"/>
        <dbReference type="ChEBI" id="CHEBI:36208"/>
        <dbReference type="ChEBI" id="CHEBI:57783"/>
        <dbReference type="ChEBI" id="CHEBI:58349"/>
        <dbReference type="EC" id="1.1.1.25"/>
    </reaction>
</comment>
<comment type="pathway">
    <text evidence="1">Metabolic intermediate biosynthesis; chorismate biosynthesis; chorismate from D-erythrose 4-phosphate and phosphoenolpyruvate: step 4/7.</text>
</comment>
<comment type="subunit">
    <text evidence="1">Homodimer.</text>
</comment>
<comment type="similarity">
    <text evidence="1">Belongs to the shikimate dehydrogenase family.</text>
</comment>
<keyword id="KW-0028">Amino-acid biosynthesis</keyword>
<keyword id="KW-0057">Aromatic amino acid biosynthesis</keyword>
<keyword id="KW-0521">NADP</keyword>
<keyword id="KW-0560">Oxidoreductase</keyword>
<keyword id="KW-1185">Reference proteome</keyword>
<protein>
    <recommendedName>
        <fullName evidence="1">Shikimate dehydrogenase (NADP(+))</fullName>
        <shortName evidence="1">SDH</shortName>
        <ecNumber evidence="1">1.1.1.25</ecNumber>
    </recommendedName>
</protein>